<feature type="chain" id="PRO_0000334306" description="Na(+)/H(+) antiporter NhaA">
    <location>
        <begin position="1"/>
        <end position="382"/>
    </location>
</feature>
<feature type="transmembrane region" description="Helical" evidence="1">
    <location>
        <begin position="11"/>
        <end position="31"/>
    </location>
</feature>
<feature type="transmembrane region" description="Helical" evidence="1">
    <location>
        <begin position="47"/>
        <end position="67"/>
    </location>
</feature>
<feature type="transmembrane region" description="Helical" evidence="1">
    <location>
        <begin position="88"/>
        <end position="108"/>
    </location>
</feature>
<feature type="transmembrane region" description="Helical" evidence="1">
    <location>
        <begin position="116"/>
        <end position="136"/>
    </location>
</feature>
<feature type="transmembrane region" description="Helical" evidence="1">
    <location>
        <begin position="145"/>
        <end position="165"/>
    </location>
</feature>
<feature type="transmembrane region" description="Helical" evidence="1">
    <location>
        <begin position="170"/>
        <end position="190"/>
    </location>
</feature>
<feature type="transmembrane region" description="Helical" evidence="1">
    <location>
        <begin position="261"/>
        <end position="283"/>
    </location>
</feature>
<feature type="transmembrane region" description="Helical" evidence="1">
    <location>
        <begin position="299"/>
        <end position="319"/>
    </location>
</feature>
<feature type="transmembrane region" description="Helical" evidence="1">
    <location>
        <begin position="327"/>
        <end position="347"/>
    </location>
</feature>
<feature type="transmembrane region" description="Helical" evidence="1">
    <location>
        <begin position="353"/>
        <end position="373"/>
    </location>
</feature>
<name>NHAA_GEOSL</name>
<evidence type="ECO:0000255" key="1">
    <source>
        <dbReference type="HAMAP-Rule" id="MF_01844"/>
    </source>
</evidence>
<gene>
    <name evidence="1" type="primary">nhaA</name>
    <name type="ordered locus">GSU2303</name>
</gene>
<proteinExistence type="inferred from homology"/>
<accession>Q74AP9</accession>
<organism>
    <name type="scientific">Geobacter sulfurreducens (strain ATCC 51573 / DSM 12127 / PCA)</name>
    <dbReference type="NCBI Taxonomy" id="243231"/>
    <lineage>
        <taxon>Bacteria</taxon>
        <taxon>Pseudomonadati</taxon>
        <taxon>Thermodesulfobacteriota</taxon>
        <taxon>Desulfuromonadia</taxon>
        <taxon>Geobacterales</taxon>
        <taxon>Geobacteraceae</taxon>
        <taxon>Geobacter</taxon>
    </lineage>
</organism>
<reference key="1">
    <citation type="journal article" date="2003" name="Science">
        <title>Genome of Geobacter sulfurreducens: metal reduction in subsurface environments.</title>
        <authorList>
            <person name="Methe B.A."/>
            <person name="Nelson K.E."/>
            <person name="Eisen J.A."/>
            <person name="Paulsen I.T."/>
            <person name="Nelson W.C."/>
            <person name="Heidelberg J.F."/>
            <person name="Wu D."/>
            <person name="Wu M."/>
            <person name="Ward N.L."/>
            <person name="Beanan M.J."/>
            <person name="Dodson R.J."/>
            <person name="Madupu R."/>
            <person name="Brinkac L.M."/>
            <person name="Daugherty S.C."/>
            <person name="DeBoy R.T."/>
            <person name="Durkin A.S."/>
            <person name="Gwinn M.L."/>
            <person name="Kolonay J.F."/>
            <person name="Sullivan S.A."/>
            <person name="Haft D.H."/>
            <person name="Selengut J."/>
            <person name="Davidsen T.M."/>
            <person name="Zafar N."/>
            <person name="White O."/>
            <person name="Tran B."/>
            <person name="Romero C."/>
            <person name="Forberger H.A."/>
            <person name="Weidman J.F."/>
            <person name="Khouri H.M."/>
            <person name="Feldblyum T.V."/>
            <person name="Utterback T.R."/>
            <person name="Van Aken S.E."/>
            <person name="Lovley D.R."/>
            <person name="Fraser C.M."/>
        </authorList>
    </citation>
    <scope>NUCLEOTIDE SEQUENCE [LARGE SCALE GENOMIC DNA]</scope>
    <source>
        <strain>ATCC 51573 / DSM 12127 / PCA</strain>
    </source>
</reference>
<dbReference type="EMBL" id="AE017180">
    <property type="protein sequence ID" value="AAR35679.1"/>
    <property type="molecule type" value="Genomic_DNA"/>
</dbReference>
<dbReference type="RefSeq" id="NP_953352.1">
    <property type="nucleotide sequence ID" value="NC_002939.5"/>
</dbReference>
<dbReference type="RefSeq" id="WP_010942940.1">
    <property type="nucleotide sequence ID" value="NC_002939.5"/>
</dbReference>
<dbReference type="SMR" id="Q74AP9"/>
<dbReference type="FunCoup" id="Q74AP9">
    <property type="interactions" value="98"/>
</dbReference>
<dbReference type="STRING" id="243231.GSU2303"/>
<dbReference type="EnsemblBacteria" id="AAR35679">
    <property type="protein sequence ID" value="AAR35679"/>
    <property type="gene ID" value="GSU2303"/>
</dbReference>
<dbReference type="KEGG" id="gsu:GSU2303"/>
<dbReference type="PATRIC" id="fig|243231.5.peg.2334"/>
<dbReference type="eggNOG" id="COG3004">
    <property type="taxonomic scope" value="Bacteria"/>
</dbReference>
<dbReference type="HOGENOM" id="CLU_015803_1_2_7"/>
<dbReference type="InParanoid" id="Q74AP9"/>
<dbReference type="OrthoDB" id="9808135at2"/>
<dbReference type="Proteomes" id="UP000000577">
    <property type="component" value="Chromosome"/>
</dbReference>
<dbReference type="GO" id="GO:0005886">
    <property type="term" value="C:plasma membrane"/>
    <property type="evidence" value="ECO:0000318"/>
    <property type="project" value="GO_Central"/>
</dbReference>
<dbReference type="GO" id="GO:0015385">
    <property type="term" value="F:sodium:proton antiporter activity"/>
    <property type="evidence" value="ECO:0000318"/>
    <property type="project" value="GO_Central"/>
</dbReference>
<dbReference type="GO" id="GO:0006885">
    <property type="term" value="P:regulation of pH"/>
    <property type="evidence" value="ECO:0007669"/>
    <property type="project" value="InterPro"/>
</dbReference>
<dbReference type="Gene3D" id="1.20.1530.10">
    <property type="entry name" value="Na+/H+ antiporter like domain"/>
    <property type="match status" value="1"/>
</dbReference>
<dbReference type="HAMAP" id="MF_01844">
    <property type="entry name" value="NhaA"/>
    <property type="match status" value="1"/>
</dbReference>
<dbReference type="InterPro" id="IPR023171">
    <property type="entry name" value="Na/H_antiporter_dom_sf"/>
</dbReference>
<dbReference type="InterPro" id="IPR004670">
    <property type="entry name" value="NhaA"/>
</dbReference>
<dbReference type="PANTHER" id="PTHR30341:SF0">
    <property type="entry name" value="NA(+)_H(+) ANTIPORTER NHAA"/>
    <property type="match status" value="1"/>
</dbReference>
<dbReference type="PANTHER" id="PTHR30341">
    <property type="entry name" value="SODIUM ION/PROTON ANTIPORTER NHAA-RELATED"/>
    <property type="match status" value="1"/>
</dbReference>
<dbReference type="Pfam" id="PF06965">
    <property type="entry name" value="Na_H_antiport_1"/>
    <property type="match status" value="1"/>
</dbReference>
<comment type="function">
    <text evidence="1">Na(+)/H(+) antiporter that extrudes sodium in exchange for external protons.</text>
</comment>
<comment type="catalytic activity">
    <reaction evidence="1">
        <text>Na(+)(in) + 2 H(+)(out) = Na(+)(out) + 2 H(+)(in)</text>
        <dbReference type="Rhea" id="RHEA:29251"/>
        <dbReference type="ChEBI" id="CHEBI:15378"/>
        <dbReference type="ChEBI" id="CHEBI:29101"/>
    </reaction>
    <physiologicalReaction direction="left-to-right" evidence="1">
        <dbReference type="Rhea" id="RHEA:29252"/>
    </physiologicalReaction>
</comment>
<comment type="subcellular location">
    <subcellularLocation>
        <location evidence="1">Cell inner membrane</location>
        <topology evidence="1">Multi-pass membrane protein</topology>
    </subcellularLocation>
</comment>
<comment type="similarity">
    <text evidence="1">Belongs to the NhaA Na(+)/H(+) (TC 2.A.33) antiporter family.</text>
</comment>
<sequence>MRKRINLLREFSVPLIAGVVVALLWANLDPAGYHSFIEQPFFGGMSFHFVVNELFMVLFFGIAAVEITQSCLPGGDLNPLRKAVNPLLATLGGVVGPVLVYLGLNAIIGGPELTRGWGIPTATDIALAWLVARLVFGAGHPAVSFLLLLAVADDAIGLAIIAVFYPDPNHPTEPIWLFLTVAGMVVAYILRSLKSRSYWPYVVVGGGLAWTGLFKAHLHPALALVFIIPFLPHPSRETAHLFEADPRDTSTLARFEHDWKIVVDFGLFMFGLANAGVGFSSVGAATWLVLASLVIGKTLGIFAMGYVGRALGFPLPQQVGAKELAMTGLVAGIGLTVALFVAGVAFVEPDIQGSAKMGALLSGGVSIVAIMLGRALNVRRIP</sequence>
<protein>
    <recommendedName>
        <fullName evidence="1">Na(+)/H(+) antiporter NhaA</fullName>
    </recommendedName>
    <alternativeName>
        <fullName evidence="1">Sodium/proton antiporter NhaA</fullName>
    </alternativeName>
</protein>
<keyword id="KW-0050">Antiport</keyword>
<keyword id="KW-0997">Cell inner membrane</keyword>
<keyword id="KW-1003">Cell membrane</keyword>
<keyword id="KW-0406">Ion transport</keyword>
<keyword id="KW-0472">Membrane</keyword>
<keyword id="KW-1185">Reference proteome</keyword>
<keyword id="KW-0915">Sodium</keyword>
<keyword id="KW-0739">Sodium transport</keyword>
<keyword id="KW-0812">Transmembrane</keyword>
<keyword id="KW-1133">Transmembrane helix</keyword>
<keyword id="KW-0813">Transport</keyword>